<organism>
    <name type="scientific">Macaca mulatta</name>
    <name type="common">Rhesus macaque</name>
    <dbReference type="NCBI Taxonomy" id="9544"/>
    <lineage>
        <taxon>Eukaryota</taxon>
        <taxon>Metazoa</taxon>
        <taxon>Chordata</taxon>
        <taxon>Craniata</taxon>
        <taxon>Vertebrata</taxon>
        <taxon>Euteleostomi</taxon>
        <taxon>Mammalia</taxon>
        <taxon>Eutheria</taxon>
        <taxon>Euarchontoglires</taxon>
        <taxon>Primates</taxon>
        <taxon>Haplorrhini</taxon>
        <taxon>Catarrhini</taxon>
        <taxon>Cercopithecidae</taxon>
        <taxon>Cercopithecinae</taxon>
        <taxon>Macaca</taxon>
    </lineage>
</organism>
<dbReference type="EMBL" id="AF311921">
    <property type="protein sequence ID" value="AAL09456.1"/>
    <property type="molecule type" value="Genomic_DNA"/>
</dbReference>
<dbReference type="SMR" id="Q95LF2"/>
<dbReference type="FunCoup" id="Q95LF2">
    <property type="interactions" value="278"/>
</dbReference>
<dbReference type="STRING" id="9544.ENSMMUP00000001737"/>
<dbReference type="GlyCosmos" id="Q95LF2">
    <property type="glycosylation" value="3 sites, No reported glycans"/>
</dbReference>
<dbReference type="PaxDb" id="9544-ENSMMUP00000001737"/>
<dbReference type="eggNOG" id="ENOG502SNW7">
    <property type="taxonomic scope" value="Eukaryota"/>
</dbReference>
<dbReference type="InParanoid" id="Q95LF2"/>
<dbReference type="Proteomes" id="UP000006718">
    <property type="component" value="Unassembled WGS sequence"/>
</dbReference>
<dbReference type="GO" id="GO:0005769">
    <property type="term" value="C:early endosome"/>
    <property type="evidence" value="ECO:0007669"/>
    <property type="project" value="UniProtKB-SubCell"/>
</dbReference>
<dbReference type="GO" id="GO:0016020">
    <property type="term" value="C:membrane"/>
    <property type="evidence" value="ECO:0007669"/>
    <property type="project" value="UniProtKB-SubCell"/>
</dbReference>
<dbReference type="GO" id="GO:0055037">
    <property type="term" value="C:recycling endosome"/>
    <property type="evidence" value="ECO:0007669"/>
    <property type="project" value="UniProtKB-SubCell"/>
</dbReference>
<dbReference type="GO" id="GO:0019957">
    <property type="term" value="F:C-C chemokine binding"/>
    <property type="evidence" value="ECO:0000318"/>
    <property type="project" value="GO_Central"/>
</dbReference>
<dbReference type="GO" id="GO:0004930">
    <property type="term" value="F:G protein-coupled receptor activity"/>
    <property type="evidence" value="ECO:0007669"/>
    <property type="project" value="UniProtKB-KW"/>
</dbReference>
<dbReference type="GO" id="GO:0070098">
    <property type="term" value="P:chemokine-mediated signaling pathway"/>
    <property type="evidence" value="ECO:0007669"/>
    <property type="project" value="InterPro"/>
</dbReference>
<dbReference type="GO" id="GO:0006954">
    <property type="term" value="P:inflammatory response"/>
    <property type="evidence" value="ECO:0000318"/>
    <property type="project" value="GO_Central"/>
</dbReference>
<dbReference type="GO" id="GO:0032642">
    <property type="term" value="P:regulation of chemokine production"/>
    <property type="evidence" value="ECO:0000318"/>
    <property type="project" value="GO_Central"/>
</dbReference>
<dbReference type="CDD" id="cd15010">
    <property type="entry name" value="7tmA_ACKR1_DARC"/>
    <property type="match status" value="1"/>
</dbReference>
<dbReference type="FunFam" id="1.20.1070.10:FF:000266">
    <property type="entry name" value="Atypical chemokine receptor 1"/>
    <property type="match status" value="1"/>
</dbReference>
<dbReference type="Gene3D" id="1.20.1070.10">
    <property type="entry name" value="Rhodopsin 7-helix transmembrane proteins"/>
    <property type="match status" value="1"/>
</dbReference>
<dbReference type="InterPro" id="IPR005384">
    <property type="entry name" value="Duffy_chemokine_rcpt"/>
</dbReference>
<dbReference type="PANTHER" id="PTHR14181:SF1">
    <property type="entry name" value="ATYPICAL CHEMOKINE RECEPTOR 1"/>
    <property type="match status" value="1"/>
</dbReference>
<dbReference type="PANTHER" id="PTHR14181">
    <property type="entry name" value="DUFFY ANTIGEN/CHEMOKINE RECEPTOR"/>
    <property type="match status" value="1"/>
</dbReference>
<dbReference type="PRINTS" id="PR01559">
    <property type="entry name" value="DUFFYANTIGEN"/>
</dbReference>
<proteinExistence type="evidence at protein level"/>
<gene>
    <name type="primary">ACKR1</name>
    <name type="synonym">DARC</name>
    <name type="synonym">FY</name>
</gene>
<reference key="1">
    <citation type="journal article" date="2004" name="Immunogenetics">
        <title>Sequence, evolution and ligand binding properties of mammalian Duffy antigen/receptor for chemokines.</title>
        <authorList>
            <person name="Tournamille C."/>
            <person name="Blancher A."/>
            <person name="Le Van Kim C."/>
            <person name="Gane P."/>
            <person name="Apoil P.-A."/>
            <person name="Nakamoto W."/>
            <person name="Cartron J.-P."/>
            <person name="Colin Y."/>
        </authorList>
    </citation>
    <scope>NUCLEOTIDE SEQUENCE [GENOMIC DNA]</scope>
</reference>
<reference key="2">
    <citation type="journal article" date="1996" name="J. Exp. Med.">
        <title>The domain on the Duffy blood group antigen for binding Plasmodium vivax and P. knowlesi malarial parasites to erythrocytes.</title>
        <authorList>
            <person name="Chitnis C.E."/>
            <person name="Chaudhuri A."/>
            <person name="Horuk R."/>
            <person name="Pogo A.O."/>
            <person name="Miller L.H."/>
        </authorList>
    </citation>
    <scope>FUNCTION (MICROBIAL INFECTION)</scope>
    <scope>INTERACTION WITH PLASMODIUM DBPALPHA (MICROBIAL INFECTION)</scope>
</reference>
<accession>Q95LF2</accession>
<comment type="function">
    <text evidence="1">Atypical chemokine receptor that controls chemokine levels and localization via high-affinity chemokine binding that is uncoupled from classic ligand-driven signal transduction cascades, resulting instead in chemokine sequestration, degradation, or transcytosis. Also known as interceptor (internalizing receptor) or chemokine-scavenging receptor or chemokine decoy receptor. Has a promiscuous chemokine-binding profile, interacting with inflammatory chemokines of both the CXC and the CC subfamilies but not with homeostatic chemokines. Acts as a receptor for chemokines including CCL2, CCL5, CCL7, CCL11, CCL13, CCL14, CCL17, CXCL5, CXCL6, IL8/CXCL8, CXCL11, GRO, RANTES, MCP-1 and TARC. May regulate chemokine bioavailability and, consequently, leukocyte recruitment through two distinct mechanisms: when expressed in endothelial cells, it sustains the abluminal to luminal transcytosis of tissue-derived chemokines and their subsequent presentation to circulating leukocytes; when expressed in erythrocytes, serves as blood reservoir of cognate chemokines but also as a chemokine sink, buffering potential surges in plasma chemokine levels (By similarity).</text>
</comment>
<comment type="function">
    <text evidence="6">(Microbial infection) Acts as a receptor for the malaria parasite Plasmodium knowlesi.</text>
</comment>
<comment type="subunit">
    <text evidence="3">(Microbial infection) Interacts (via N-terminal extracellular domain) with Plasmodium knowlesi Duffy receptor alpha form (DBPalpha) (via region II).</text>
</comment>
<comment type="subcellular location">
    <subcellularLocation>
        <location evidence="1">Early endosome</location>
    </subcellularLocation>
    <subcellularLocation>
        <location evidence="1">Recycling endosome</location>
    </subcellularLocation>
    <subcellularLocation>
        <location>Membrane</location>
        <topology>Multi-pass membrane protein</topology>
    </subcellularLocation>
    <text evidence="1">Predominantly localizes to endocytic vesicles, and upon stimulation by the ligand is internalized via caveolae. Once internalized, the ligand dissociates from the receptor, and is targeted to degradation while the receptor is recycled back to the cell membrane (By similarity).</text>
</comment>
<comment type="similarity">
    <text evidence="5">Belongs to the G-protein coupled receptor 1 family. Atypical chemokine receptor subfamily.</text>
</comment>
<protein>
    <recommendedName>
        <fullName>Atypical chemokine receptor 1</fullName>
    </recommendedName>
    <alternativeName>
        <fullName>Duffy antigen/chemokine receptor</fullName>
    </alternativeName>
    <alternativeName>
        <fullName evidence="4">Duffy blood group antigen</fullName>
    </alternativeName>
    <cdAntigenName>CD234</cdAntigenName>
</protein>
<name>ACKR1_MACMU</name>
<keyword id="KW-1015">Disulfide bond</keyword>
<keyword id="KW-0967">Endosome</keyword>
<keyword id="KW-0297">G-protein coupled receptor</keyword>
<keyword id="KW-0325">Glycoprotein</keyword>
<keyword id="KW-0472">Membrane</keyword>
<keyword id="KW-0675">Receptor</keyword>
<keyword id="KW-1185">Reference proteome</keyword>
<keyword id="KW-0807">Transducer</keyword>
<keyword id="KW-0812">Transmembrane</keyword>
<keyword id="KW-1133">Transmembrane helix</keyword>
<sequence>MGNCLHPAELSPSTQNSSQLNSDLWNFSYDGNDSFPDVDYDANLEAAAPCHSCNLLDDSALPFFILVSVLGILASGTVLFMFFRPLFHWQLCPGWPVLAQLAVGSALFSIVVPILAPGLGNTRSSALCSLGYCVWYGSAFAQALLLGCHASLGPKLGAGQVPGLTLGLSVGLWGVAALLTLPITLASGASGGLCTPAYSMELKALQATHAVACLAVFVLLPLGLFGAKGLKKALGMGPGPWMNILWAWFIFWWPHGVVLGLDFLVRSKLLLLSTCLAQQALDLLLNLAEALAILHCVATPLLLALFCHQATRTLLPSLPLPEGWSSHLDTLGSES</sequence>
<evidence type="ECO:0000250" key="1"/>
<evidence type="ECO:0000255" key="2"/>
<evidence type="ECO:0000269" key="3">
    <source>
    </source>
</evidence>
<evidence type="ECO:0000303" key="4">
    <source>
    </source>
</evidence>
<evidence type="ECO:0000305" key="5"/>
<evidence type="ECO:0000305" key="6">
    <source>
    </source>
</evidence>
<feature type="chain" id="PRO_0000152586" description="Atypical chemokine receptor 1">
    <location>
        <begin position="1"/>
        <end position="335"/>
    </location>
</feature>
<feature type="topological domain" description="Extracellular" evidence="2">
    <location>
        <begin position="1"/>
        <end position="62"/>
    </location>
</feature>
<feature type="transmembrane region" description="Helical; Name=1" evidence="2">
    <location>
        <begin position="63"/>
        <end position="83"/>
    </location>
</feature>
<feature type="topological domain" description="Cytoplasmic" evidence="2">
    <location>
        <begin position="84"/>
        <end position="94"/>
    </location>
</feature>
<feature type="transmembrane region" description="Helical; Name=2" evidence="2">
    <location>
        <begin position="95"/>
        <end position="115"/>
    </location>
</feature>
<feature type="topological domain" description="Extracellular" evidence="2">
    <location>
        <begin position="116"/>
        <end position="128"/>
    </location>
</feature>
<feature type="transmembrane region" description="Helical; Name=3" evidence="2">
    <location>
        <begin position="129"/>
        <end position="152"/>
    </location>
</feature>
<feature type="topological domain" description="Cytoplasmic" evidence="2">
    <location>
        <begin position="153"/>
        <end position="165"/>
    </location>
</feature>
<feature type="transmembrane region" description="Helical; Name=4" evidence="2">
    <location>
        <begin position="166"/>
        <end position="186"/>
    </location>
</feature>
<feature type="topological domain" description="Extracellular" evidence="2">
    <location>
        <begin position="187"/>
        <end position="206"/>
    </location>
</feature>
<feature type="transmembrane region" description="Helical; Name=5" evidence="2">
    <location>
        <begin position="207"/>
        <end position="227"/>
    </location>
</feature>
<feature type="topological domain" description="Cytoplasmic" evidence="2">
    <location>
        <begin position="228"/>
        <end position="243"/>
    </location>
</feature>
<feature type="transmembrane region" description="Helical; Name=6" evidence="2">
    <location>
        <begin position="244"/>
        <end position="264"/>
    </location>
</feature>
<feature type="topological domain" description="Extracellular" evidence="2">
    <location>
        <begin position="265"/>
        <end position="286"/>
    </location>
</feature>
<feature type="transmembrane region" description="Helical; Name=7" evidence="2">
    <location>
        <begin position="287"/>
        <end position="307"/>
    </location>
</feature>
<feature type="topological domain" description="Cytoplasmic" evidence="2">
    <location>
        <begin position="308"/>
        <end position="335"/>
    </location>
</feature>
<feature type="glycosylation site" description="N-linked (GlcNAc...) asparagine" evidence="2">
    <location>
        <position position="16"/>
    </location>
</feature>
<feature type="glycosylation site" description="N-linked (GlcNAc...) asparagine" evidence="2">
    <location>
        <position position="26"/>
    </location>
</feature>
<feature type="glycosylation site" description="N-linked (GlcNAc...) asparagine" evidence="2">
    <location>
        <position position="32"/>
    </location>
</feature>
<feature type="disulfide bond" evidence="1">
    <location>
        <begin position="50"/>
        <end position="275"/>
    </location>
</feature>
<feature type="disulfide bond" evidence="1">
    <location>
        <begin position="128"/>
        <end position="194"/>
    </location>
</feature>